<feature type="signal peptide" evidence="4 5">
    <location>
        <begin position="1"/>
        <end position="18"/>
    </location>
</feature>
<feature type="chain" id="PRO_5000399104" description="Cysteine-rich venom protein kaouthin-1">
    <location>
        <begin position="19"/>
        <end position="239"/>
    </location>
</feature>
<feature type="domain" description="SCP">
    <location>
        <begin position="37"/>
        <end position="165"/>
    </location>
</feature>
<feature type="domain" description="ShKT" evidence="3">
    <location>
        <begin position="201"/>
        <end position="234"/>
    </location>
</feature>
<feature type="disulfide bond" evidence="3">
    <location>
        <begin position="74"/>
        <end position="152"/>
    </location>
</feature>
<feature type="disulfide bond" evidence="3">
    <location>
        <begin position="91"/>
        <end position="166"/>
    </location>
</feature>
<feature type="disulfide bond" evidence="3">
    <location>
        <begin position="147"/>
        <end position="163"/>
    </location>
</feature>
<feature type="disulfide bond" evidence="3">
    <location>
        <begin position="185"/>
        <end position="192"/>
    </location>
</feature>
<feature type="disulfide bond" evidence="3">
    <location>
        <begin position="188"/>
        <end position="197"/>
    </location>
</feature>
<feature type="disulfide bond" evidence="3">
    <location>
        <begin position="201"/>
        <end position="234"/>
    </location>
</feature>
<feature type="disulfide bond" evidence="3">
    <location>
        <begin position="210"/>
        <end position="228"/>
    </location>
</feature>
<feature type="disulfide bond" evidence="3">
    <location>
        <begin position="219"/>
        <end position="232"/>
    </location>
</feature>
<dbReference type="EMBL" id="EU938339">
    <property type="protein sequence ID" value="ACH73167.1"/>
    <property type="molecule type" value="mRNA"/>
</dbReference>
<dbReference type="SMR" id="P84805"/>
<dbReference type="GO" id="GO:0005576">
    <property type="term" value="C:extracellular region"/>
    <property type="evidence" value="ECO:0000314"/>
    <property type="project" value="UniProtKB"/>
</dbReference>
<dbReference type="GO" id="GO:0005246">
    <property type="term" value="F:calcium channel regulator activity"/>
    <property type="evidence" value="ECO:0007669"/>
    <property type="project" value="UniProtKB-KW"/>
</dbReference>
<dbReference type="GO" id="GO:0015459">
    <property type="term" value="F:potassium channel regulator activity"/>
    <property type="evidence" value="ECO:0007669"/>
    <property type="project" value="UniProtKB-KW"/>
</dbReference>
<dbReference type="GO" id="GO:0090729">
    <property type="term" value="F:toxin activity"/>
    <property type="evidence" value="ECO:0007669"/>
    <property type="project" value="UniProtKB-KW"/>
</dbReference>
<dbReference type="GO" id="GO:0006952">
    <property type="term" value="P:defense response"/>
    <property type="evidence" value="ECO:0000314"/>
    <property type="project" value="UniProtKB"/>
</dbReference>
<dbReference type="CDD" id="cd05383">
    <property type="entry name" value="CAP_CRISP"/>
    <property type="match status" value="1"/>
</dbReference>
<dbReference type="FunFam" id="1.10.10.740:FF:000001">
    <property type="entry name" value="Cysteine-rich secretory protein 2"/>
    <property type="match status" value="1"/>
</dbReference>
<dbReference type="FunFam" id="3.40.33.10:FF:000005">
    <property type="entry name" value="Cysteine-rich secretory protein 2"/>
    <property type="match status" value="1"/>
</dbReference>
<dbReference type="Gene3D" id="3.40.33.10">
    <property type="entry name" value="CAP"/>
    <property type="match status" value="1"/>
</dbReference>
<dbReference type="Gene3D" id="1.10.10.740">
    <property type="entry name" value="Crisp domain"/>
    <property type="match status" value="1"/>
</dbReference>
<dbReference type="InterPro" id="IPR018244">
    <property type="entry name" value="Allrgn_V5/Tpx1_CS"/>
</dbReference>
<dbReference type="InterPro" id="IPR014044">
    <property type="entry name" value="CAP_dom"/>
</dbReference>
<dbReference type="InterPro" id="IPR035940">
    <property type="entry name" value="CAP_sf"/>
</dbReference>
<dbReference type="InterPro" id="IPR042076">
    <property type="entry name" value="Crisp-like_dom"/>
</dbReference>
<dbReference type="InterPro" id="IPR001283">
    <property type="entry name" value="CRISP-related"/>
</dbReference>
<dbReference type="InterPro" id="IPR013871">
    <property type="entry name" value="Cysteine_rich_secretory"/>
</dbReference>
<dbReference type="InterPro" id="IPR034117">
    <property type="entry name" value="SCP_CRISP"/>
</dbReference>
<dbReference type="InterPro" id="IPR003582">
    <property type="entry name" value="ShKT_dom"/>
</dbReference>
<dbReference type="PANTHER" id="PTHR10334">
    <property type="entry name" value="CYSTEINE-RICH SECRETORY PROTEIN-RELATED"/>
    <property type="match status" value="1"/>
</dbReference>
<dbReference type="Pfam" id="PF00188">
    <property type="entry name" value="CAP"/>
    <property type="match status" value="1"/>
</dbReference>
<dbReference type="Pfam" id="PF08562">
    <property type="entry name" value="Crisp"/>
    <property type="match status" value="1"/>
</dbReference>
<dbReference type="PRINTS" id="PR00837">
    <property type="entry name" value="V5TPXLIKE"/>
</dbReference>
<dbReference type="SMART" id="SM00198">
    <property type="entry name" value="SCP"/>
    <property type="match status" value="1"/>
</dbReference>
<dbReference type="SUPFAM" id="SSF57546">
    <property type="entry name" value="Crisp domain-like"/>
    <property type="match status" value="1"/>
</dbReference>
<dbReference type="SUPFAM" id="SSF55797">
    <property type="entry name" value="PR-1-like"/>
    <property type="match status" value="1"/>
</dbReference>
<dbReference type="PROSITE" id="PS01009">
    <property type="entry name" value="CRISP_1"/>
    <property type="match status" value="1"/>
</dbReference>
<dbReference type="PROSITE" id="PS01010">
    <property type="entry name" value="CRISP_2"/>
    <property type="match status" value="1"/>
</dbReference>
<dbReference type="PROSITE" id="PS51670">
    <property type="entry name" value="SHKT"/>
    <property type="match status" value="1"/>
</dbReference>
<sequence>MIAFSLLCLAAVLRQSFGNVDFNSESTRRKKKQKEIVDLHNSLRRRVSPTASNMLKMEWYPEAASNAERWANTCSLNHSPDNLRVLEGIQCGESIYMSSNARTWTEIIHLWHDEYKNFVYGVGANPPGSVTGHYTQIVWYQTYRAGCAVSYCPSSAWSYFYVCQYCPSGNFQGKTATPYKLGPPCGDCPSACDNGLCTNPCTIYNKLTNCDSLLKQGSCQDDWIKSNCPASCFCRNKII</sequence>
<proteinExistence type="evidence at protein level"/>
<organism>
    <name type="scientific">Naja kaouthia</name>
    <name type="common">Monocled cobra</name>
    <name type="synonym">Naja siamensis</name>
    <dbReference type="NCBI Taxonomy" id="8649"/>
    <lineage>
        <taxon>Eukaryota</taxon>
        <taxon>Metazoa</taxon>
        <taxon>Chordata</taxon>
        <taxon>Craniata</taxon>
        <taxon>Vertebrata</taxon>
        <taxon>Euteleostomi</taxon>
        <taxon>Lepidosauria</taxon>
        <taxon>Squamata</taxon>
        <taxon>Bifurcata</taxon>
        <taxon>Unidentata</taxon>
        <taxon>Episquamata</taxon>
        <taxon>Toxicofera</taxon>
        <taxon>Serpentes</taxon>
        <taxon>Colubroidea</taxon>
        <taxon>Elapidae</taxon>
        <taxon>Elapinae</taxon>
        <taxon>Naja</taxon>
    </lineage>
</organism>
<protein>
    <recommendedName>
        <fullName>Cysteine-rich venom protein kaouthin-1</fullName>
    </recommendedName>
    <alternativeName>
        <fullName>Cysteine-rich venom protein 25</fullName>
        <shortName>CRVP-25k</shortName>
    </alternativeName>
</protein>
<evidence type="ECO:0000250" key="1"/>
<evidence type="ECO:0000255" key="2"/>
<evidence type="ECO:0000255" key="3">
    <source>
        <dbReference type="PROSITE-ProRule" id="PRU01005"/>
    </source>
</evidence>
<evidence type="ECO:0000269" key="4">
    <source>
    </source>
</evidence>
<evidence type="ECO:0000269" key="5">
    <source>
    </source>
</evidence>
<evidence type="ECO:0000305" key="6"/>
<reference key="1">
    <citation type="journal article" date="2009" name="J. Biochem.">
        <title>Structural divergence of cysteine-rich secretory proteins in snake venoms.</title>
        <authorList>
            <person name="Matsunaga Y."/>
            <person name="Yamazaki Y."/>
            <person name="Hyodo F."/>
            <person name="Sugiyama Y."/>
            <person name="Nozaki M."/>
            <person name="Morita T."/>
        </authorList>
    </citation>
    <scope>NUCLEOTIDE SEQUENCE [MRNA]</scope>
    <scope>PROTEIN SEQUENCE OF 19-64; 175-180 AND 207-237</scope>
    <source>
        <tissue>Venom</tissue>
        <tissue>Venom gland</tissue>
    </source>
</reference>
<reference evidence="6" key="2">
    <citation type="journal article" date="2005" name="Biochem. Biophys. Res. Commun.">
        <title>Cobra venom contains a pool of cysteine-rich secretory proteins.</title>
        <authorList>
            <person name="Osipov A.V."/>
            <person name="Levashov M.Y."/>
            <person name="Tsetlin V.I."/>
            <person name="Utkin Y.N."/>
        </authorList>
    </citation>
    <scope>PROTEIN SEQUENCE OF 19-43</scope>
    <scope>SUBCELLULAR LOCATION</scope>
    <scope>TISSUE SPECIFICITY</scope>
    <scope>MASS SPECTROMETRY</scope>
    <source>
        <tissue evidence="4">Venom</tissue>
    </source>
</reference>
<accession>P84805</accession>
<accession>B5THG8</accession>
<name>CRVP1_NAJKA</name>
<keyword id="KW-0108">Calcium channel impairing toxin</keyword>
<keyword id="KW-1221">Calcium-activated potassium channel impairing toxin</keyword>
<keyword id="KW-0903">Direct protein sequencing</keyword>
<keyword id="KW-1015">Disulfide bond</keyword>
<keyword id="KW-0872">Ion channel impairing toxin</keyword>
<keyword id="KW-0632">Potassium channel impairing toxin</keyword>
<keyword id="KW-1219">Ryanodine-sensitive calcium-release channel impairing toxin</keyword>
<keyword id="KW-0964">Secreted</keyword>
<keyword id="KW-0732">Signal</keyword>
<keyword id="KW-0800">Toxin</keyword>
<keyword id="KW-1220">Voltage-gated potassium channel impairing toxin</keyword>
<comment type="function">
    <text evidence="1">Inhibits calcium-activated potassium channels (KCa), voltage-gated potassium channel (Kv), and the calcium release channel/ryanodine receptor (RyR).</text>
</comment>
<comment type="subcellular location">
    <subcellularLocation>
        <location evidence="4">Secreted</location>
    </subcellularLocation>
</comment>
<comment type="tissue specificity">
    <text evidence="4">Expressed by the venom gland.</text>
</comment>
<comment type="mass spectrometry"/>
<comment type="miscellaneous">
    <text evidence="4">Not toxic when administered to cockroaches and mice at doses up to 5 nmol/g.</text>
</comment>
<comment type="similarity">
    <text evidence="2">Belongs to the CRISP family.</text>
</comment>